<proteinExistence type="evidence at protein level"/>
<organism>
    <name type="scientific">Paracoccus denitrificans (strain Pd 1222)</name>
    <dbReference type="NCBI Taxonomy" id="318586"/>
    <lineage>
        <taxon>Bacteria</taxon>
        <taxon>Pseudomonadati</taxon>
        <taxon>Pseudomonadota</taxon>
        <taxon>Alphaproteobacteria</taxon>
        <taxon>Rhodobacterales</taxon>
        <taxon>Paracoccaceae</taxon>
        <taxon>Paracoccus</taxon>
    </lineage>
</organism>
<gene>
    <name evidence="3" type="primary">bhcC</name>
    <name evidence="6" type="ordered locus">Pden_3919</name>
</gene>
<accession>A1B8Z1</accession>
<comment type="function">
    <text evidence="2">Catalyzes the condensation of glyoxylate and glycine into (2R,3S)-beta-hydroxyaspartate ((3S)-3-hydroxy-D-aspartate). Is essential for the growth of P.denitrificans in the presence of glycolate and glyoxylate since it functions in glyoxylate assimilation via the beta-hydroxyaspartate cycle (BHAC). Is also able to catalyze the reverse reaction in vitro, i.e. the cleavage of (3S)-3-hydroxy-D-aspartate, and that of D-threonine to a lesser extent.</text>
</comment>
<comment type="catalytic activity">
    <reaction evidence="2">
        <text>(3S)-3-hydroxy-D-aspartate = glyoxylate + glycine</text>
        <dbReference type="Rhea" id="RHEA:27934"/>
        <dbReference type="ChEBI" id="CHEBI:36655"/>
        <dbReference type="ChEBI" id="CHEBI:57305"/>
        <dbReference type="ChEBI" id="CHEBI:60894"/>
        <dbReference type="EC" id="4.1.3.41"/>
    </reaction>
    <physiologicalReaction direction="right-to-left" evidence="2">
        <dbReference type="Rhea" id="RHEA:27936"/>
    </physiologicalReaction>
</comment>
<comment type="catalytic activity">
    <reaction evidence="1">
        <text>(3R)-3-hydroxy-D-aspartate = glyoxylate + glycine</text>
        <dbReference type="Rhea" id="RHEA:27938"/>
        <dbReference type="ChEBI" id="CHEBI:36655"/>
        <dbReference type="ChEBI" id="CHEBI:57305"/>
        <dbReference type="ChEBI" id="CHEBI:60898"/>
        <dbReference type="EC" id="4.1.3.41"/>
    </reaction>
</comment>
<comment type="cofactor">
    <cofactor evidence="2">
        <name>pyridoxal 5'-phosphate</name>
        <dbReference type="ChEBI" id="CHEBI:597326"/>
    </cofactor>
    <text evidence="2">Binds 1 pyridoxal phosphate per subunit.</text>
</comment>
<comment type="cofactor">
    <cofactor evidence="2">
        <name>Mg(2+)</name>
        <dbReference type="ChEBI" id="CHEBI:18420"/>
    </cofactor>
</comment>
<comment type="biophysicochemical properties">
    <kinetics>
        <KM evidence="2">0.23 mM for glyoxylate</KM>
        <KM evidence="2">4.31 mM for glycine</KM>
        <KM evidence="2">0.28 mM for (3S)-3-hydroxy-D-aspartate</KM>
        <KM evidence="2">9.24 mM for D-threonine</KM>
        <text evidence="2">kcat is 91 sec(-1) for the condensation of glyoxylate and glycine. kcat is 33 sec(-1) for the cleavage of (3S)-3-hydroxy-D-aspartate. kcat is 76 sec(-1) for the cleavage of D-threonine into acetaldehyde and glycine (PubMed:31723261).</text>
    </kinetics>
</comment>
<comment type="subunit">
    <text evidence="2">Homodimer.</text>
</comment>
<comment type="induction">
    <text evidence="2">Induced by glycolate.</text>
</comment>
<comment type="disruption phenotype">
    <text evidence="2">Abolishes growth on glycolate or glyoxylate, but the deletion mutant strain is still able to grow on acetate, succinate or glucose with comparable growth rates as for the wild type.</text>
</comment>
<comment type="miscellaneous">
    <text evidence="5">The beta-hydroxyaspartate cycle (BHAC) consists of BhcA, BhcB, BhcC, and BhcD enzyme activities. Overall, it converts two molecules of glyoxylate (C2) into oxaloacetate (C4) without the loss of carbon as CO2, under consumption of just one reducing equivalent and regeneration of the catalytic amino donor, which makes it one of the most efficient glyoxylate assimilation pathways. This cycle is of ecological importance in the assimilation of phytoplankton-derived dissolved organic carbon in marine environments by marine Proteobacteria, and suggests a trophic interaction between autotrophic phytoplankton and heterotrophic bacterioplankton. Oxaloacetate formed in the BHAC can directly enter the tricarboxylic acid cycle or serve as substrate for anabolic reactions.</text>
</comment>
<comment type="similarity">
    <text evidence="4">Belongs to the DSD1 family.</text>
</comment>
<keyword id="KW-0002">3D-structure</keyword>
<keyword id="KW-0456">Lyase</keyword>
<keyword id="KW-0460">Magnesium</keyword>
<keyword id="KW-0479">Metal-binding</keyword>
<keyword id="KW-0663">Pyridoxal phosphate</keyword>
<keyword id="KW-1185">Reference proteome</keyword>
<name>BHCC_PARDP</name>
<evidence type="ECO:0000250" key="1">
    <source>
        <dbReference type="UniProtKB" id="Q8GRC8"/>
    </source>
</evidence>
<evidence type="ECO:0000269" key="2">
    <source>
    </source>
</evidence>
<evidence type="ECO:0000303" key="3">
    <source>
    </source>
</evidence>
<evidence type="ECO:0000305" key="4"/>
<evidence type="ECO:0000305" key="5">
    <source>
    </source>
</evidence>
<evidence type="ECO:0000312" key="6">
    <source>
        <dbReference type="EMBL" id="ABL71985.1"/>
    </source>
</evidence>
<evidence type="ECO:0007744" key="7">
    <source>
        <dbReference type="PDB" id="6QKB"/>
    </source>
</evidence>
<evidence type="ECO:0007829" key="8">
    <source>
        <dbReference type="PDB" id="6QKB"/>
    </source>
</evidence>
<feature type="chain" id="PRO_0000449100" description="3-hydroxy-D-aspartate aldolase">
    <location>
        <begin position="1"/>
        <end position="387"/>
    </location>
</feature>
<feature type="binding site" evidence="2">
    <location>
        <position position="85"/>
    </location>
    <ligand>
        <name>pyridoxal 5'-phosphate</name>
        <dbReference type="ChEBI" id="CHEBI:597326"/>
    </ligand>
</feature>
<feature type="binding site" evidence="2">
    <location>
        <position position="238"/>
    </location>
    <ligand>
        <name>pyridoxal 5'-phosphate</name>
        <dbReference type="ChEBI" id="CHEBI:597326"/>
    </ligand>
</feature>
<feature type="binding site" evidence="2">
    <location>
        <begin position="256"/>
        <end position="257"/>
    </location>
    <ligand>
        <name>pyridoxal 5'-phosphate</name>
        <dbReference type="ChEBI" id="CHEBI:597326"/>
    </ligand>
</feature>
<feature type="binding site" evidence="2">
    <location>
        <position position="265"/>
    </location>
    <ligand>
        <name>pyridoxal 5'-phosphate</name>
        <dbReference type="ChEBI" id="CHEBI:597326"/>
    </ligand>
</feature>
<feature type="binding site" evidence="2">
    <location>
        <position position="355"/>
    </location>
    <ligand>
        <name>Mg(2+)</name>
        <dbReference type="ChEBI" id="CHEBI:18420"/>
    </ligand>
</feature>
<feature type="binding site" evidence="2">
    <location>
        <position position="357"/>
    </location>
    <ligand>
        <name>Mg(2+)</name>
        <dbReference type="ChEBI" id="CHEBI:18420"/>
    </ligand>
</feature>
<feature type="modified residue" description="N6-(pyridoxal phosphate)lysine" evidence="2">
    <location>
        <position position="62"/>
    </location>
</feature>
<feature type="helix" evidence="8">
    <location>
        <begin position="7"/>
        <end position="9"/>
    </location>
</feature>
<feature type="turn" evidence="8">
    <location>
        <begin position="12"/>
        <end position="14"/>
    </location>
</feature>
<feature type="helix" evidence="8">
    <location>
        <begin position="24"/>
        <end position="26"/>
    </location>
</feature>
<feature type="strand" evidence="8">
    <location>
        <begin position="29"/>
        <end position="35"/>
    </location>
</feature>
<feature type="helix" evidence="8">
    <location>
        <begin position="36"/>
        <end position="52"/>
    </location>
</feature>
<feature type="turn" evidence="8">
    <location>
        <begin position="61"/>
        <end position="64"/>
    </location>
</feature>
<feature type="helix" evidence="8">
    <location>
        <begin position="67"/>
        <end position="77"/>
    </location>
</feature>
<feature type="strand" evidence="8">
    <location>
        <begin position="82"/>
        <end position="86"/>
    </location>
</feature>
<feature type="helix" evidence="8">
    <location>
        <begin position="87"/>
        <end position="95"/>
    </location>
</feature>
<feature type="strand" evidence="8">
    <location>
        <begin position="99"/>
        <end position="106"/>
    </location>
</feature>
<feature type="helix" evidence="8">
    <location>
        <begin position="110"/>
        <end position="118"/>
    </location>
</feature>
<feature type="helix" evidence="8">
    <location>
        <begin position="119"/>
        <end position="122"/>
    </location>
</feature>
<feature type="strand" evidence="8">
    <location>
        <begin position="125"/>
        <end position="132"/>
    </location>
</feature>
<feature type="helix" evidence="8">
    <location>
        <begin position="135"/>
        <end position="146"/>
    </location>
</feature>
<feature type="strand" evidence="8">
    <location>
        <begin position="150"/>
        <end position="156"/>
    </location>
</feature>
<feature type="strand" evidence="8">
    <location>
        <begin position="162"/>
        <end position="165"/>
    </location>
</feature>
<feature type="helix" evidence="8">
    <location>
        <begin position="168"/>
        <end position="180"/>
    </location>
</feature>
<feature type="strand" evidence="8">
    <location>
        <begin position="184"/>
        <end position="190"/>
    </location>
</feature>
<feature type="turn" evidence="8">
    <location>
        <begin position="195"/>
        <end position="198"/>
    </location>
</feature>
<feature type="helix" evidence="8">
    <location>
        <begin position="202"/>
        <end position="225"/>
    </location>
</feature>
<feature type="strand" evidence="8">
    <location>
        <begin position="231"/>
        <end position="235"/>
    </location>
</feature>
<feature type="turn" evidence="8">
    <location>
        <begin position="238"/>
        <end position="240"/>
    </location>
</feature>
<feature type="helix" evidence="8">
    <location>
        <begin position="241"/>
        <end position="244"/>
    </location>
</feature>
<feature type="strand" evidence="8">
    <location>
        <begin position="247"/>
        <end position="249"/>
    </location>
</feature>
<feature type="helix" evidence="8">
    <location>
        <begin position="257"/>
        <end position="259"/>
    </location>
</feature>
<feature type="helix" evidence="8">
    <location>
        <begin position="263"/>
        <end position="266"/>
    </location>
</feature>
<feature type="turn" evidence="8">
    <location>
        <begin position="276"/>
        <end position="280"/>
    </location>
</feature>
<feature type="strand" evidence="8">
    <location>
        <begin position="285"/>
        <end position="293"/>
    </location>
</feature>
<feature type="strand" evidence="8">
    <location>
        <begin position="299"/>
        <end position="303"/>
    </location>
</feature>
<feature type="helix" evidence="8">
    <location>
        <begin position="306"/>
        <end position="308"/>
    </location>
</feature>
<feature type="strand" evidence="8">
    <location>
        <begin position="325"/>
        <end position="329"/>
    </location>
</feature>
<feature type="strand" evidence="8">
    <location>
        <begin position="334"/>
        <end position="337"/>
    </location>
</feature>
<feature type="strand" evidence="8">
    <location>
        <begin position="348"/>
        <end position="352"/>
    </location>
</feature>
<feature type="helix" evidence="8">
    <location>
        <begin position="356"/>
        <end position="360"/>
    </location>
</feature>
<feature type="strand" evidence="8">
    <location>
        <begin position="364"/>
        <end position="370"/>
    </location>
</feature>
<feature type="strand" evidence="8">
    <location>
        <begin position="373"/>
        <end position="379"/>
    </location>
</feature>
<feature type="turn" evidence="8">
    <location>
        <begin position="381"/>
        <end position="384"/>
    </location>
</feature>
<dbReference type="EC" id="4.1.3.41" evidence="2"/>
<dbReference type="EMBL" id="CP000490">
    <property type="protein sequence ID" value="ABL71985.1"/>
    <property type="molecule type" value="Genomic_DNA"/>
</dbReference>
<dbReference type="RefSeq" id="WP_011750152.1">
    <property type="nucleotide sequence ID" value="NC_008687.1"/>
</dbReference>
<dbReference type="PDB" id="6QKB">
    <property type="method" value="X-ray"/>
    <property type="resolution" value="1.70 A"/>
    <property type="chains" value="A/B=1-387"/>
</dbReference>
<dbReference type="PDBsum" id="6QKB"/>
<dbReference type="SMR" id="A1B8Z1"/>
<dbReference type="STRING" id="318586.Pden_3919"/>
<dbReference type="EnsemblBacteria" id="ABL71985">
    <property type="protein sequence ID" value="ABL71985"/>
    <property type="gene ID" value="Pden_3919"/>
</dbReference>
<dbReference type="GeneID" id="93453579"/>
<dbReference type="KEGG" id="pde:Pden_3919"/>
<dbReference type="eggNOG" id="COG3616">
    <property type="taxonomic scope" value="Bacteria"/>
</dbReference>
<dbReference type="HOGENOM" id="CLU_031639_2_0_5"/>
<dbReference type="OrthoDB" id="9772497at2"/>
<dbReference type="Proteomes" id="UP000000361">
    <property type="component" value="Chromosome 2"/>
</dbReference>
<dbReference type="GO" id="GO:0008721">
    <property type="term" value="F:D-serine ammonia-lyase activity"/>
    <property type="evidence" value="ECO:0007669"/>
    <property type="project" value="TreeGrafter"/>
</dbReference>
<dbReference type="GO" id="GO:0000287">
    <property type="term" value="F:magnesium ion binding"/>
    <property type="evidence" value="ECO:0000314"/>
    <property type="project" value="UniProtKB"/>
</dbReference>
<dbReference type="GO" id="GO:0016833">
    <property type="term" value="F:oxo-acid-lyase activity"/>
    <property type="evidence" value="ECO:0000314"/>
    <property type="project" value="UniProtKB"/>
</dbReference>
<dbReference type="GO" id="GO:0030170">
    <property type="term" value="F:pyridoxal phosphate binding"/>
    <property type="evidence" value="ECO:0000314"/>
    <property type="project" value="UniProtKB"/>
</dbReference>
<dbReference type="GO" id="GO:0036088">
    <property type="term" value="P:D-serine catabolic process"/>
    <property type="evidence" value="ECO:0007669"/>
    <property type="project" value="TreeGrafter"/>
</dbReference>
<dbReference type="GO" id="GO:0046296">
    <property type="term" value="P:glycolate catabolic process"/>
    <property type="evidence" value="ECO:0000315"/>
    <property type="project" value="UniProtKB"/>
</dbReference>
<dbReference type="GO" id="GO:0009436">
    <property type="term" value="P:glyoxylate catabolic process"/>
    <property type="evidence" value="ECO:0000315"/>
    <property type="project" value="UniProtKB"/>
</dbReference>
<dbReference type="CDD" id="cd06819">
    <property type="entry name" value="PLPDE_III_LS_D-TA"/>
    <property type="match status" value="1"/>
</dbReference>
<dbReference type="FunFam" id="2.40.37.20:FF:000001">
    <property type="entry name" value="D-3-hydroxyaspartate aldolase"/>
    <property type="match status" value="1"/>
</dbReference>
<dbReference type="FunFam" id="3.20.20.10:FF:000026">
    <property type="entry name" value="D-threonine aldolase"/>
    <property type="match status" value="1"/>
</dbReference>
<dbReference type="Gene3D" id="3.20.20.10">
    <property type="entry name" value="Alanine racemase"/>
    <property type="match status" value="1"/>
</dbReference>
<dbReference type="Gene3D" id="2.40.37.20">
    <property type="entry name" value="D-serine dehydratase-like domain"/>
    <property type="match status" value="1"/>
</dbReference>
<dbReference type="InterPro" id="IPR001608">
    <property type="entry name" value="Ala_racemase_N"/>
</dbReference>
<dbReference type="InterPro" id="IPR051466">
    <property type="entry name" value="D-amino_acid_metab_enzyme"/>
</dbReference>
<dbReference type="InterPro" id="IPR026956">
    <property type="entry name" value="D-ser_dehydrat-like_dom"/>
</dbReference>
<dbReference type="InterPro" id="IPR042208">
    <property type="entry name" value="D-ser_dehydrat-like_sf"/>
</dbReference>
<dbReference type="InterPro" id="IPR054854">
    <property type="entry name" value="HdxyAspAldBhcC"/>
</dbReference>
<dbReference type="InterPro" id="IPR029066">
    <property type="entry name" value="PLP-binding_barrel"/>
</dbReference>
<dbReference type="NCBIfam" id="NF045642">
    <property type="entry name" value="HdxyAspAldBhcC"/>
    <property type="match status" value="1"/>
</dbReference>
<dbReference type="PANTHER" id="PTHR28004:SF2">
    <property type="entry name" value="D-SERINE DEHYDRATASE"/>
    <property type="match status" value="1"/>
</dbReference>
<dbReference type="PANTHER" id="PTHR28004">
    <property type="entry name" value="ZGC:162816-RELATED"/>
    <property type="match status" value="1"/>
</dbReference>
<dbReference type="Pfam" id="PF01168">
    <property type="entry name" value="Ala_racemase_N"/>
    <property type="match status" value="1"/>
</dbReference>
<dbReference type="Pfam" id="PF14031">
    <property type="entry name" value="D-ser_dehydrat"/>
    <property type="match status" value="1"/>
</dbReference>
<dbReference type="SMART" id="SM01119">
    <property type="entry name" value="D-ser_dehydrat"/>
    <property type="match status" value="1"/>
</dbReference>
<dbReference type="SUPFAM" id="SSF51419">
    <property type="entry name" value="PLP-binding barrel"/>
    <property type="match status" value="1"/>
</dbReference>
<reference key="1">
    <citation type="submission" date="2006-12" db="EMBL/GenBank/DDBJ databases">
        <title>Complete sequence of chromosome 2 of Paracoccus denitrificans PD1222.</title>
        <authorList>
            <person name="Copeland A."/>
            <person name="Lucas S."/>
            <person name="Lapidus A."/>
            <person name="Barry K."/>
            <person name="Detter J.C."/>
            <person name="Glavina del Rio T."/>
            <person name="Hammon N."/>
            <person name="Israni S."/>
            <person name="Dalin E."/>
            <person name="Tice H."/>
            <person name="Pitluck S."/>
            <person name="Munk A.C."/>
            <person name="Brettin T."/>
            <person name="Bruce D."/>
            <person name="Han C."/>
            <person name="Tapia R."/>
            <person name="Gilna P."/>
            <person name="Schmutz J."/>
            <person name="Larimer F."/>
            <person name="Land M."/>
            <person name="Hauser L."/>
            <person name="Kyrpides N."/>
            <person name="Lykidis A."/>
            <person name="Spiro S."/>
            <person name="Richardson D.J."/>
            <person name="Moir J.W.B."/>
            <person name="Ferguson S.J."/>
            <person name="van Spanning R.J.M."/>
            <person name="Richardson P."/>
        </authorList>
    </citation>
    <scope>NUCLEOTIDE SEQUENCE [LARGE SCALE GENOMIC DNA]</scope>
    <source>
        <strain>Pd 1222</strain>
    </source>
</reference>
<reference evidence="7" key="2">
    <citation type="journal article" date="2019" name="Nature">
        <title>Marine Proteobacteria metabolize glycolate via the beta-hydroxyaspartate cycle.</title>
        <authorList>
            <person name="Schada von Borzyskowski L."/>
            <person name="Severi F."/>
            <person name="Krueger K."/>
            <person name="Hermann L."/>
            <person name="Gilardet A."/>
            <person name="Sippel F."/>
            <person name="Pommerenke B."/>
            <person name="Claus P."/>
            <person name="Cortina N.S."/>
            <person name="Glatter T."/>
            <person name="Zauner S."/>
            <person name="Zarzycki J."/>
            <person name="Fuchs B.M."/>
            <person name="Bremer E."/>
            <person name="Maier U.G."/>
            <person name="Amann R.I."/>
            <person name="Erb T.J."/>
        </authorList>
    </citation>
    <scope>X-RAY CRYSTALLOGRAPHY (1.70 ANGSTROMS) IN COMPLEX WITH PLP AND MAGNESIUM</scope>
    <scope>FUNCTION</scope>
    <scope>CATALYTIC ACTIVITY</scope>
    <scope>COFACTOR</scope>
    <scope>BIOPHYSICOCHEMICAL PROPERTIES</scope>
    <scope>SUBUNIT</scope>
    <scope>DISRUPTION PHENOTYPE</scope>
    <scope>INDUCTION</scope>
    <source>
        <strain>ATCC 17741 / DSM 413 / NBRC 16712 / NCCB 22021 / NCIMB 11627</strain>
    </source>
</reference>
<sequence>MNAKTDFSGYEVGYDIPALPGMDESEIQTPCLILDLDALERNIRKMGDYAKAHGMRHRSHGKMHKSVDVQKLQESLGGSVGVCCQKVSEAEAFARGGIKDVLVTNEVREPAKIDRLARLPKTGATVTVCVDDVQNIADLSAAAQKHGTELGIFVEIDCGAGRCGVTTKEAVVEIAKAAAAAPNLTFKGIQAYQGAMQHMDSFEDRKAKLDAAIAQVKEAVDALEAEGLAPEFVSGGGTGSYYFESNSGIYNELQCGSYAFMDADYGRIHDAEGKRIDQGEWENALFILTSVMSHAKPHLAVVDAGLKAQSVDSGLPFVYGRDDVKYIKCSDEHGVVEDKDGVLKVNDKLRLVPGHCDPTCNVHDWYVGVRNGKVETVWPVSARGKGY</sequence>
<protein>
    <recommendedName>
        <fullName evidence="5">3-hydroxy-D-aspartate aldolase</fullName>
        <ecNumber evidence="2">4.1.3.41</ecNumber>
    </recommendedName>
    <alternativeName>
        <fullName evidence="3">beta-hydroxyaspartate aldolase</fullName>
    </alternativeName>
</protein>